<comment type="function">
    <text evidence="1">Catalyzes the oxidation of L-aspartate to iminoaspartate, the first step in the de novo biosynthesis of NAD(+).</text>
</comment>
<comment type="catalytic activity">
    <reaction evidence="1">
        <text>L-aspartate + O2 = iminosuccinate + H2O2</text>
        <dbReference type="Rhea" id="RHEA:25876"/>
        <dbReference type="ChEBI" id="CHEBI:15379"/>
        <dbReference type="ChEBI" id="CHEBI:16240"/>
        <dbReference type="ChEBI" id="CHEBI:29991"/>
        <dbReference type="ChEBI" id="CHEBI:77875"/>
        <dbReference type="EC" id="1.4.3.16"/>
    </reaction>
    <physiologicalReaction direction="left-to-right" evidence="1">
        <dbReference type="Rhea" id="RHEA:25877"/>
    </physiologicalReaction>
</comment>
<comment type="cofactor">
    <cofactor evidence="1">
        <name>FAD</name>
        <dbReference type="ChEBI" id="CHEBI:57692"/>
    </cofactor>
    <text evidence="1">Binds 1 FAD per subunit.</text>
</comment>
<comment type="pathway">
    <text evidence="1">Cofactor biosynthesis; NAD(+) biosynthesis; iminoaspartate from L-aspartate (oxidase route): step 1/1.</text>
</comment>
<comment type="subcellular location">
    <subcellularLocation>
        <location evidence="1">Cytoplasm</location>
    </subcellularLocation>
</comment>
<comment type="similarity">
    <text evidence="2">Belongs to the FAD-dependent oxidoreductase 2 family. NadB subfamily.</text>
</comment>
<sequence>MTADIHHIGGAPVIIGAGIAGLMTALHLAPQPVVLLSRTSLGTEASSILAQGGLAASLGEDDSPDLHLADTLAAGEGLCDEQMARRVVEAAPQAVENLIRLGTPFDRSLDGRLQLGLEAAHSRRRIVHAAGDATGRELFRALLGVARRTRSITIMEGMTALRLVVAEGSIVGLLTVLHGAVFALPTRRVVLATGGIGGLFCDTTNPLSSFGHGLALAACAGAELADLEFVQFHPTALDIARRPMPLVSEAVRGEGAVLIDEHGHRLLADTPGAELASRDVVARAISDQLAAGHGVYLDARHCLGQKFARRFPAIDAICKHAGIDPAVEPIPVRPAAHYHMGGVAVDAEGRTSVSGLWACGEVACTGLHGANRLASNSLTEAVATAAWVAESVAGTSAGWQWPRLPATVPIRPDPSPIRTIVSNALGIVRNGKSLCDTVATLLPISVCETAAADPALVALLMAIAALRREESRGSHFRSDFPGRDAAALPSRLTLCTAFENAVTLRWQASERSR</sequence>
<protein>
    <recommendedName>
        <fullName evidence="1">L-aspartate oxidase</fullName>
        <shortName evidence="1">LASPO</shortName>
        <ecNumber evidence="1">1.4.3.16</ecNumber>
    </recommendedName>
    <alternativeName>
        <fullName>Quinolinate synthase B</fullName>
    </alternativeName>
</protein>
<reference key="1">
    <citation type="journal article" date="2000" name="DNA Res.">
        <title>Complete genome structure of the nitrogen-fixing symbiotic bacterium Mesorhizobium loti.</title>
        <authorList>
            <person name="Kaneko T."/>
            <person name="Nakamura Y."/>
            <person name="Sato S."/>
            <person name="Asamizu E."/>
            <person name="Kato T."/>
            <person name="Sasamoto S."/>
            <person name="Watanabe A."/>
            <person name="Idesawa K."/>
            <person name="Ishikawa A."/>
            <person name="Kawashima K."/>
            <person name="Kimura T."/>
            <person name="Kishida Y."/>
            <person name="Kiyokawa C."/>
            <person name="Kohara M."/>
            <person name="Matsumoto M."/>
            <person name="Matsuno A."/>
            <person name="Mochizuki Y."/>
            <person name="Nakayama S."/>
            <person name="Nakazaki N."/>
            <person name="Shimpo S."/>
            <person name="Sugimoto M."/>
            <person name="Takeuchi C."/>
            <person name="Yamada M."/>
            <person name="Tabata S."/>
        </authorList>
    </citation>
    <scope>NUCLEOTIDE SEQUENCE [LARGE SCALE GENOMIC DNA]</scope>
    <source>
        <strain>LMG 29417 / CECT 9101 / MAFF 303099</strain>
    </source>
</reference>
<evidence type="ECO:0000250" key="1">
    <source>
        <dbReference type="UniProtKB" id="P10902"/>
    </source>
</evidence>
<evidence type="ECO:0000305" key="2"/>
<feature type="chain" id="PRO_0000184396" description="L-aspartate oxidase">
    <location>
        <begin position="1"/>
        <end position="513"/>
    </location>
</feature>
<feature type="active site" description="Proton donor/acceptor" evidence="1">
    <location>
        <position position="278"/>
    </location>
</feature>
<feature type="binding site" evidence="1">
    <location>
        <begin position="17"/>
        <end position="20"/>
    </location>
    <ligand>
        <name>FAD</name>
        <dbReference type="ChEBI" id="CHEBI:57692"/>
    </ligand>
</feature>
<feature type="binding site" evidence="1">
    <location>
        <begin position="46"/>
        <end position="53"/>
    </location>
    <ligand>
        <name>FAD</name>
        <dbReference type="ChEBI" id="CHEBI:57692"/>
    </ligand>
</feature>
<feature type="binding site" evidence="1">
    <location>
        <position position="361"/>
    </location>
    <ligand>
        <name>FAD</name>
        <dbReference type="ChEBI" id="CHEBI:57692"/>
    </ligand>
</feature>
<feature type="binding site" evidence="1">
    <location>
        <begin position="377"/>
        <end position="378"/>
    </location>
    <ligand>
        <name>FAD</name>
        <dbReference type="ChEBI" id="CHEBI:57692"/>
    </ligand>
</feature>
<feature type="site" description="Important in orienting the L-aspartate substrate" evidence="1">
    <location>
        <position position="118"/>
    </location>
</feature>
<organism>
    <name type="scientific">Mesorhizobium japonicum (strain LMG 29417 / CECT 9101 / MAFF 303099)</name>
    <name type="common">Mesorhizobium loti (strain MAFF 303099)</name>
    <dbReference type="NCBI Taxonomy" id="266835"/>
    <lineage>
        <taxon>Bacteria</taxon>
        <taxon>Pseudomonadati</taxon>
        <taxon>Pseudomonadota</taxon>
        <taxon>Alphaproteobacteria</taxon>
        <taxon>Hyphomicrobiales</taxon>
        <taxon>Phyllobacteriaceae</taxon>
        <taxon>Mesorhizobium</taxon>
    </lineage>
</organism>
<accession>Q98AV8</accession>
<gene>
    <name type="primary">nadB</name>
    <name type="ordered locus">mll5834</name>
</gene>
<proteinExistence type="inferred from homology"/>
<keyword id="KW-0963">Cytoplasm</keyword>
<keyword id="KW-0274">FAD</keyword>
<keyword id="KW-0285">Flavoprotein</keyword>
<keyword id="KW-0547">Nucleotide-binding</keyword>
<keyword id="KW-0560">Oxidoreductase</keyword>
<keyword id="KW-0662">Pyridine nucleotide biosynthesis</keyword>
<dbReference type="EC" id="1.4.3.16" evidence="1"/>
<dbReference type="EMBL" id="BA000012">
    <property type="protein sequence ID" value="BAB52214.1"/>
    <property type="molecule type" value="Genomic_DNA"/>
</dbReference>
<dbReference type="RefSeq" id="WP_010913549.1">
    <property type="nucleotide sequence ID" value="NC_002678.2"/>
</dbReference>
<dbReference type="SMR" id="Q98AV8"/>
<dbReference type="KEGG" id="mlo:mll5834"/>
<dbReference type="PATRIC" id="fig|266835.9.peg.4640"/>
<dbReference type="eggNOG" id="COG0029">
    <property type="taxonomic scope" value="Bacteria"/>
</dbReference>
<dbReference type="HOGENOM" id="CLU_014312_3_2_5"/>
<dbReference type="UniPathway" id="UPA00253">
    <property type="reaction ID" value="UER00326"/>
</dbReference>
<dbReference type="Proteomes" id="UP000000552">
    <property type="component" value="Chromosome"/>
</dbReference>
<dbReference type="GO" id="GO:0005737">
    <property type="term" value="C:cytoplasm"/>
    <property type="evidence" value="ECO:0007669"/>
    <property type="project" value="UniProtKB-SubCell"/>
</dbReference>
<dbReference type="GO" id="GO:0008734">
    <property type="term" value="F:L-aspartate oxidase activity"/>
    <property type="evidence" value="ECO:0007669"/>
    <property type="project" value="UniProtKB-EC"/>
</dbReference>
<dbReference type="GO" id="GO:0000166">
    <property type="term" value="F:nucleotide binding"/>
    <property type="evidence" value="ECO:0007669"/>
    <property type="project" value="UniProtKB-KW"/>
</dbReference>
<dbReference type="GO" id="GO:0034628">
    <property type="term" value="P:'de novo' NAD biosynthetic process from L-aspartate"/>
    <property type="evidence" value="ECO:0007669"/>
    <property type="project" value="TreeGrafter"/>
</dbReference>
<dbReference type="FunFam" id="3.90.700.10:FF:000002">
    <property type="entry name" value="L-aspartate oxidase"/>
    <property type="match status" value="1"/>
</dbReference>
<dbReference type="Gene3D" id="3.50.50.60">
    <property type="entry name" value="FAD/NAD(P)-binding domain"/>
    <property type="match status" value="1"/>
</dbReference>
<dbReference type="Gene3D" id="1.20.58.100">
    <property type="entry name" value="Fumarate reductase/succinate dehydrogenase flavoprotein-like, C-terminal domain"/>
    <property type="match status" value="1"/>
</dbReference>
<dbReference type="Gene3D" id="3.90.700.10">
    <property type="entry name" value="Succinate dehydrogenase/fumarate reductase flavoprotein, catalytic domain"/>
    <property type="match status" value="1"/>
</dbReference>
<dbReference type="InterPro" id="IPR003953">
    <property type="entry name" value="FAD-dep_OxRdtase_2_FAD-bd"/>
</dbReference>
<dbReference type="InterPro" id="IPR036188">
    <property type="entry name" value="FAD/NAD-bd_sf"/>
</dbReference>
<dbReference type="InterPro" id="IPR037099">
    <property type="entry name" value="Fum_R/Succ_DH_flav-like_C_sf"/>
</dbReference>
<dbReference type="InterPro" id="IPR015939">
    <property type="entry name" value="Fum_Rdtase/Succ_DH_flav-like_C"/>
</dbReference>
<dbReference type="InterPro" id="IPR005288">
    <property type="entry name" value="NadB"/>
</dbReference>
<dbReference type="InterPro" id="IPR027477">
    <property type="entry name" value="Succ_DH/fumarate_Rdtase_cat_sf"/>
</dbReference>
<dbReference type="NCBIfam" id="TIGR00551">
    <property type="entry name" value="nadB"/>
    <property type="match status" value="1"/>
</dbReference>
<dbReference type="NCBIfam" id="NF005701">
    <property type="entry name" value="PRK07512.1"/>
    <property type="match status" value="1"/>
</dbReference>
<dbReference type="PANTHER" id="PTHR42716">
    <property type="entry name" value="L-ASPARTATE OXIDASE"/>
    <property type="match status" value="1"/>
</dbReference>
<dbReference type="PANTHER" id="PTHR42716:SF2">
    <property type="entry name" value="L-ASPARTATE OXIDASE, CHLOROPLASTIC"/>
    <property type="match status" value="1"/>
</dbReference>
<dbReference type="Pfam" id="PF00890">
    <property type="entry name" value="FAD_binding_2"/>
    <property type="match status" value="1"/>
</dbReference>
<dbReference type="Pfam" id="PF02910">
    <property type="entry name" value="Succ_DH_flav_C"/>
    <property type="match status" value="1"/>
</dbReference>
<dbReference type="PRINTS" id="PR00368">
    <property type="entry name" value="FADPNR"/>
</dbReference>
<dbReference type="SUPFAM" id="SSF51905">
    <property type="entry name" value="FAD/NAD(P)-binding domain"/>
    <property type="match status" value="1"/>
</dbReference>
<dbReference type="SUPFAM" id="SSF46977">
    <property type="entry name" value="Succinate dehydrogenase/fumarate reductase flavoprotein C-terminal domain"/>
    <property type="match status" value="1"/>
</dbReference>
<dbReference type="SUPFAM" id="SSF56425">
    <property type="entry name" value="Succinate dehydrogenase/fumarate reductase flavoprotein, catalytic domain"/>
    <property type="match status" value="1"/>
</dbReference>
<name>NADB_RHILO</name>